<protein>
    <recommendedName>
        <fullName evidence="1">UPF0173 metal-dependent hydrolase RD1_1994</fullName>
    </recommendedName>
</protein>
<sequence>MQIIWLGHGSFRIEIGDQVLLIDPWLTGNPMLAEDQHAAATTGATHILITHGHFDHTADVVALSKSLEAPVVGIYDFMSYFEAKEGLSVVGFNMGGTVTLGDVAVSLVPALHSTSYGPDATAPLGREAGFIIKGERYTVYVSGDTGISAEMDWIGDYYKPDIGILSAGGHFTMDMKGAAYAAKRYFDFKTVIPCHYKTFDLLEQSATDLIDALPDVDVIEPQVMTPIRF</sequence>
<keyword id="KW-0378">Hydrolase</keyword>
<keyword id="KW-1185">Reference proteome</keyword>
<comment type="similarity">
    <text evidence="1">Belongs to the UPF0173 family.</text>
</comment>
<proteinExistence type="inferred from homology"/>
<organism>
    <name type="scientific">Roseobacter denitrificans (strain ATCC 33942 / OCh 114)</name>
    <name type="common">Erythrobacter sp. (strain OCh 114)</name>
    <name type="synonym">Roseobacter denitrificans</name>
    <dbReference type="NCBI Taxonomy" id="375451"/>
    <lineage>
        <taxon>Bacteria</taxon>
        <taxon>Pseudomonadati</taxon>
        <taxon>Pseudomonadota</taxon>
        <taxon>Alphaproteobacteria</taxon>
        <taxon>Rhodobacterales</taxon>
        <taxon>Roseobacteraceae</taxon>
        <taxon>Roseobacter</taxon>
    </lineage>
</organism>
<feature type="chain" id="PRO_0000367212" description="UPF0173 metal-dependent hydrolase RD1_1994">
    <location>
        <begin position="1"/>
        <end position="229"/>
    </location>
</feature>
<reference key="1">
    <citation type="journal article" date="2007" name="J. Bacteriol.">
        <title>The complete genome sequence of Roseobacter denitrificans reveals a mixotrophic rather than photosynthetic metabolism.</title>
        <authorList>
            <person name="Swingley W.D."/>
            <person name="Sadekar S."/>
            <person name="Mastrian S.D."/>
            <person name="Matthies H.J."/>
            <person name="Hao J."/>
            <person name="Ramos H."/>
            <person name="Acharya C.R."/>
            <person name="Conrad A.L."/>
            <person name="Taylor H.L."/>
            <person name="Dejesa L.C."/>
            <person name="Shah M.K."/>
            <person name="O'Huallachain M.E."/>
            <person name="Lince M.T."/>
            <person name="Blankenship R.E."/>
            <person name="Beatty J.T."/>
            <person name="Touchman J.W."/>
        </authorList>
    </citation>
    <scope>NUCLEOTIDE SEQUENCE [LARGE SCALE GENOMIC DNA]</scope>
    <source>
        <strain>ATCC 33942 / OCh 114</strain>
    </source>
</reference>
<dbReference type="EMBL" id="CP000362">
    <property type="protein sequence ID" value="ABG31598.1"/>
    <property type="molecule type" value="Genomic_DNA"/>
</dbReference>
<dbReference type="RefSeq" id="WP_011568215.1">
    <property type="nucleotide sequence ID" value="NC_008209.1"/>
</dbReference>
<dbReference type="SMR" id="Q168J5"/>
<dbReference type="STRING" id="375451.RD1_1994"/>
<dbReference type="KEGG" id="rde:RD1_1994"/>
<dbReference type="eggNOG" id="COG2220">
    <property type="taxonomic scope" value="Bacteria"/>
</dbReference>
<dbReference type="HOGENOM" id="CLU_070010_4_0_5"/>
<dbReference type="OrthoDB" id="9789133at2"/>
<dbReference type="Proteomes" id="UP000007029">
    <property type="component" value="Chromosome"/>
</dbReference>
<dbReference type="GO" id="GO:0016787">
    <property type="term" value="F:hydrolase activity"/>
    <property type="evidence" value="ECO:0007669"/>
    <property type="project" value="UniProtKB-UniRule"/>
</dbReference>
<dbReference type="Gene3D" id="3.60.15.10">
    <property type="entry name" value="Ribonuclease Z/Hydroxyacylglutathione hydrolase-like"/>
    <property type="match status" value="1"/>
</dbReference>
<dbReference type="HAMAP" id="MF_00457">
    <property type="entry name" value="UPF0173"/>
    <property type="match status" value="1"/>
</dbReference>
<dbReference type="InterPro" id="IPR001279">
    <property type="entry name" value="Metallo-B-lactamas"/>
</dbReference>
<dbReference type="InterPro" id="IPR036866">
    <property type="entry name" value="RibonucZ/Hydroxyglut_hydro"/>
</dbReference>
<dbReference type="InterPro" id="IPR022877">
    <property type="entry name" value="UPF0173"/>
</dbReference>
<dbReference type="InterPro" id="IPR050114">
    <property type="entry name" value="UPF0173_UPF0282_UlaG_hydrolase"/>
</dbReference>
<dbReference type="NCBIfam" id="NF001911">
    <property type="entry name" value="PRK00685.1"/>
    <property type="match status" value="1"/>
</dbReference>
<dbReference type="PANTHER" id="PTHR43546:SF3">
    <property type="entry name" value="UPF0173 METAL-DEPENDENT HYDROLASE MJ1163"/>
    <property type="match status" value="1"/>
</dbReference>
<dbReference type="PANTHER" id="PTHR43546">
    <property type="entry name" value="UPF0173 METAL-DEPENDENT HYDROLASE MJ1163-RELATED"/>
    <property type="match status" value="1"/>
</dbReference>
<dbReference type="Pfam" id="PF12706">
    <property type="entry name" value="Lactamase_B_2"/>
    <property type="match status" value="1"/>
</dbReference>
<dbReference type="SMART" id="SM00849">
    <property type="entry name" value="Lactamase_B"/>
    <property type="match status" value="1"/>
</dbReference>
<dbReference type="SUPFAM" id="SSF56281">
    <property type="entry name" value="Metallo-hydrolase/oxidoreductase"/>
    <property type="match status" value="1"/>
</dbReference>
<evidence type="ECO:0000255" key="1">
    <source>
        <dbReference type="HAMAP-Rule" id="MF_00457"/>
    </source>
</evidence>
<name>Y1994_ROSDO</name>
<accession>Q168J5</accession>
<gene>
    <name type="ordered locus">RD1_1994</name>
</gene>